<reference evidence="4" key="1">
    <citation type="journal article" date="2002" name="Nature">
        <title>The genome sequence of Schizosaccharomyces pombe.</title>
        <authorList>
            <person name="Wood V."/>
            <person name="Gwilliam R."/>
            <person name="Rajandream M.A."/>
            <person name="Lyne M.H."/>
            <person name="Lyne R."/>
            <person name="Stewart A."/>
            <person name="Sgouros J.G."/>
            <person name="Peat N."/>
            <person name="Hayles J."/>
            <person name="Baker S.G."/>
            <person name="Basham D."/>
            <person name="Bowman S."/>
            <person name="Brooks K."/>
            <person name="Brown D."/>
            <person name="Brown S."/>
            <person name="Chillingworth T."/>
            <person name="Churcher C.M."/>
            <person name="Collins M."/>
            <person name="Connor R."/>
            <person name="Cronin A."/>
            <person name="Davis P."/>
            <person name="Feltwell T."/>
            <person name="Fraser A."/>
            <person name="Gentles S."/>
            <person name="Goble A."/>
            <person name="Hamlin N."/>
            <person name="Harris D.E."/>
            <person name="Hidalgo J."/>
            <person name="Hodgson G."/>
            <person name="Holroyd S."/>
            <person name="Hornsby T."/>
            <person name="Howarth S."/>
            <person name="Huckle E.J."/>
            <person name="Hunt S."/>
            <person name="Jagels K."/>
            <person name="James K.D."/>
            <person name="Jones L."/>
            <person name="Jones M."/>
            <person name="Leather S."/>
            <person name="McDonald S."/>
            <person name="McLean J."/>
            <person name="Mooney P."/>
            <person name="Moule S."/>
            <person name="Mungall K.L."/>
            <person name="Murphy L.D."/>
            <person name="Niblett D."/>
            <person name="Odell C."/>
            <person name="Oliver K."/>
            <person name="O'Neil S."/>
            <person name="Pearson D."/>
            <person name="Quail M.A."/>
            <person name="Rabbinowitsch E."/>
            <person name="Rutherford K.M."/>
            <person name="Rutter S."/>
            <person name="Saunders D."/>
            <person name="Seeger K."/>
            <person name="Sharp S."/>
            <person name="Skelton J."/>
            <person name="Simmonds M.N."/>
            <person name="Squares R."/>
            <person name="Squares S."/>
            <person name="Stevens K."/>
            <person name="Taylor K."/>
            <person name="Taylor R.G."/>
            <person name="Tivey A."/>
            <person name="Walsh S.V."/>
            <person name="Warren T."/>
            <person name="Whitehead S."/>
            <person name="Woodward J.R."/>
            <person name="Volckaert G."/>
            <person name="Aert R."/>
            <person name="Robben J."/>
            <person name="Grymonprez B."/>
            <person name="Weltjens I."/>
            <person name="Vanstreels E."/>
            <person name="Rieger M."/>
            <person name="Schaefer M."/>
            <person name="Mueller-Auer S."/>
            <person name="Gabel C."/>
            <person name="Fuchs M."/>
            <person name="Duesterhoeft A."/>
            <person name="Fritzc C."/>
            <person name="Holzer E."/>
            <person name="Moestl D."/>
            <person name="Hilbert H."/>
            <person name="Borzym K."/>
            <person name="Langer I."/>
            <person name="Beck A."/>
            <person name="Lehrach H."/>
            <person name="Reinhardt R."/>
            <person name="Pohl T.M."/>
            <person name="Eger P."/>
            <person name="Zimmermann W."/>
            <person name="Wedler H."/>
            <person name="Wambutt R."/>
            <person name="Purnelle B."/>
            <person name="Goffeau A."/>
            <person name="Cadieu E."/>
            <person name="Dreano S."/>
            <person name="Gloux S."/>
            <person name="Lelaure V."/>
            <person name="Mottier S."/>
            <person name="Galibert F."/>
            <person name="Aves S.J."/>
            <person name="Xiang Z."/>
            <person name="Hunt C."/>
            <person name="Moore K."/>
            <person name="Hurst S.M."/>
            <person name="Lucas M."/>
            <person name="Rochet M."/>
            <person name="Gaillardin C."/>
            <person name="Tallada V.A."/>
            <person name="Garzon A."/>
            <person name="Thode G."/>
            <person name="Daga R.R."/>
            <person name="Cruzado L."/>
            <person name="Jimenez J."/>
            <person name="Sanchez M."/>
            <person name="del Rey F."/>
            <person name="Benito J."/>
            <person name="Dominguez A."/>
            <person name="Revuelta J.L."/>
            <person name="Moreno S."/>
            <person name="Armstrong J."/>
            <person name="Forsburg S.L."/>
            <person name="Cerutti L."/>
            <person name="Lowe T."/>
            <person name="McCombie W.R."/>
            <person name="Paulsen I."/>
            <person name="Potashkin J."/>
            <person name="Shpakovski G.V."/>
            <person name="Ussery D."/>
            <person name="Barrell B.G."/>
            <person name="Nurse P."/>
        </authorList>
    </citation>
    <scope>NUCLEOTIDE SEQUENCE [LARGE SCALE GENOMIC DNA]</scope>
    <source>
        <strain>972 / ATCC 24843</strain>
    </source>
</reference>
<reference evidence="3" key="2">
    <citation type="journal article" date="2006" name="Nat. Biotechnol.">
        <title>ORFeome cloning and global analysis of protein localization in the fission yeast Schizosaccharomyces pombe.</title>
        <authorList>
            <person name="Matsuyama A."/>
            <person name="Arai R."/>
            <person name="Yashiroda Y."/>
            <person name="Shirai A."/>
            <person name="Kamata A."/>
            <person name="Sekido S."/>
            <person name="Kobayashi Y."/>
            <person name="Hashimoto A."/>
            <person name="Hamamoto M."/>
            <person name="Hiraoka Y."/>
            <person name="Horinouchi S."/>
            <person name="Yoshida M."/>
        </authorList>
    </citation>
    <scope>SUBCELLULAR LOCATION [LARGE SCALE ANALYSIS]</scope>
</reference>
<comment type="subcellular location">
    <subcellularLocation>
        <location evidence="2">Vacuole</location>
    </subcellularLocation>
    <subcellularLocation>
        <location evidence="1">Membrane</location>
        <topology evidence="1">Multi-pass membrane protein</topology>
    </subcellularLocation>
</comment>
<comment type="similarity">
    <text evidence="3">Belongs to the UPF0494 family.</text>
</comment>
<sequence>MVRDTRNVDLERGLELCKPEKVNKQNLFTNIVKPQKDKINIKTDKIKFFLNNLFTEFSKFHDSCYPDGRISTRSKLRWPLLIIWCILIVFAIDKNFEVKDFLSIWINESFINENRFYSEIWGPIAIYICLFILLLLGLIYCSKIVVKAIPLISIVIAAVVVIIAVAMVKILYICHWLIYKILILAFGIKVKPLGDTLPTHNGETGSHSKATVGSDIEQIEFQNMPTPVKK</sequence>
<accession>Q9P3V3</accession>
<name>YI47_SCHPO</name>
<evidence type="ECO:0000255" key="1"/>
<evidence type="ECO:0000269" key="2">
    <source>
    </source>
</evidence>
<evidence type="ECO:0000305" key="3"/>
<evidence type="ECO:0000312" key="4">
    <source>
        <dbReference type="EMBL" id="CAB94274.1"/>
    </source>
</evidence>
<proteinExistence type="inferred from homology"/>
<feature type="chain" id="PRO_0000306280" description="UPF0494 membrane protein C1348.07">
    <location>
        <begin position="1"/>
        <end position="230"/>
    </location>
</feature>
<feature type="transmembrane region" description="Helical" evidence="1">
    <location>
        <begin position="78"/>
        <end position="98"/>
    </location>
</feature>
<feature type="transmembrane region" description="Helical" evidence="1">
    <location>
        <begin position="120"/>
        <end position="140"/>
    </location>
</feature>
<feature type="transmembrane region" description="Helical" evidence="1">
    <location>
        <begin position="148"/>
        <end position="168"/>
    </location>
</feature>
<dbReference type="EMBL" id="CU329671">
    <property type="protein sequence ID" value="CAB94274.1"/>
    <property type="molecule type" value="Genomic_DNA"/>
</dbReference>
<dbReference type="RefSeq" id="NP_592769.1">
    <property type="nucleotide sequence ID" value="NM_001020932.2"/>
</dbReference>
<dbReference type="BioGRID" id="279568">
    <property type="interactions" value="25"/>
</dbReference>
<dbReference type="STRING" id="284812.Q9P3V3"/>
<dbReference type="PaxDb" id="4896-SPBC1348.07.1"/>
<dbReference type="EnsemblFungi" id="SPBC1348.07.1">
    <property type="protein sequence ID" value="SPBC1348.07.1:pep"/>
    <property type="gene ID" value="SPBC1348.07"/>
</dbReference>
<dbReference type="KEGG" id="spo:2543136"/>
<dbReference type="PomBase" id="SPBC1348.07"/>
<dbReference type="VEuPathDB" id="FungiDB:SPBC1348.07"/>
<dbReference type="HOGENOM" id="CLU_097271_0_0_1"/>
<dbReference type="InParanoid" id="Q9P3V3"/>
<dbReference type="PhylomeDB" id="Q9P3V3"/>
<dbReference type="PRO" id="PR:Q9P3V3"/>
<dbReference type="Proteomes" id="UP000002485">
    <property type="component" value="Chromosome II"/>
</dbReference>
<dbReference type="GO" id="GO:0000324">
    <property type="term" value="C:fungal-type vacuole"/>
    <property type="evidence" value="ECO:0007005"/>
    <property type="project" value="PomBase"/>
</dbReference>
<dbReference type="GO" id="GO:0016020">
    <property type="term" value="C:membrane"/>
    <property type="evidence" value="ECO:0007669"/>
    <property type="project" value="UniProtKB-SubCell"/>
</dbReference>
<dbReference type="InterPro" id="IPR009340">
    <property type="entry name" value="DUF999"/>
</dbReference>
<dbReference type="Pfam" id="PF06198">
    <property type="entry name" value="DUF999"/>
    <property type="match status" value="1"/>
</dbReference>
<organism>
    <name type="scientific">Schizosaccharomyces pombe (strain 972 / ATCC 24843)</name>
    <name type="common">Fission yeast</name>
    <dbReference type="NCBI Taxonomy" id="284812"/>
    <lineage>
        <taxon>Eukaryota</taxon>
        <taxon>Fungi</taxon>
        <taxon>Dikarya</taxon>
        <taxon>Ascomycota</taxon>
        <taxon>Taphrinomycotina</taxon>
        <taxon>Schizosaccharomycetes</taxon>
        <taxon>Schizosaccharomycetales</taxon>
        <taxon>Schizosaccharomycetaceae</taxon>
        <taxon>Schizosaccharomyces</taxon>
    </lineage>
</organism>
<keyword id="KW-0472">Membrane</keyword>
<keyword id="KW-1185">Reference proteome</keyword>
<keyword id="KW-0812">Transmembrane</keyword>
<keyword id="KW-1133">Transmembrane helix</keyword>
<keyword id="KW-0926">Vacuole</keyword>
<gene>
    <name type="ORF">SPBC1348.07</name>
</gene>
<protein>
    <recommendedName>
        <fullName>UPF0494 membrane protein C1348.07</fullName>
    </recommendedName>
</protein>